<proteinExistence type="inferred from homology"/>
<gene>
    <name evidence="1" type="primary">hrcA</name>
    <name type="ordered locus">CT_394</name>
</gene>
<keyword id="KW-1185">Reference proteome</keyword>
<keyword id="KW-0678">Repressor</keyword>
<keyword id="KW-0346">Stress response</keyword>
<keyword id="KW-0804">Transcription</keyword>
<keyword id="KW-0805">Transcription regulation</keyword>
<accession>P36426</accession>
<accession>O84399</accession>
<reference key="1">
    <citation type="journal article" date="1994" name="Gene">
        <title>Another putative heat-shock gene and aminoacyl-tRNA synthetase gene are located upstream from the grpE-like and dnaK-like genes in Chlamydia trachomatis.</title>
        <authorList>
            <person name="Schmiel D.H."/>
            <person name="Wyrick P.B."/>
        </authorList>
    </citation>
    <scope>NUCLEOTIDE SEQUENCE [GENOMIC DNA]</scope>
    <source>
        <strain>E/UW-5/Cx</strain>
    </source>
</reference>
<reference key="2">
    <citation type="journal article" date="1998" name="Science">
        <title>Genome sequence of an obligate intracellular pathogen of humans: Chlamydia trachomatis.</title>
        <authorList>
            <person name="Stephens R.S."/>
            <person name="Kalman S."/>
            <person name="Lammel C.J."/>
            <person name="Fan J."/>
            <person name="Marathe R."/>
            <person name="Aravind L."/>
            <person name="Mitchell W.P."/>
            <person name="Olinger L."/>
            <person name="Tatusov R.L."/>
            <person name="Zhao Q."/>
            <person name="Koonin E.V."/>
            <person name="Davis R.W."/>
        </authorList>
    </citation>
    <scope>NUCLEOTIDE SEQUENCE [LARGE SCALE GENOMIC DNA]</scope>
    <source>
        <strain>ATCC VR-885 / DSM 19411 / UW-3/Cx</strain>
    </source>
</reference>
<feature type="chain" id="PRO_0000182469" description="Heat-inducible transcription repressor HrcA">
    <location>
        <begin position="1"/>
        <end position="392"/>
    </location>
</feature>
<feature type="sequence variant" description="In strain: E/UW-5/Cx.">
    <original>G</original>
    <variation>S</variation>
    <location>
        <position position="33"/>
    </location>
</feature>
<feature type="sequence variant" description="In strain: E/UW-5/Cx.">
    <original>K</original>
    <variation>E</variation>
    <location>
        <position position="213"/>
    </location>
</feature>
<feature type="sequence variant" description="In strain: E/UW-5/Cx.">
    <original>A</original>
    <variation>T</variation>
    <location>
        <position position="320"/>
    </location>
</feature>
<protein>
    <recommendedName>
        <fullName evidence="1">Heat-inducible transcription repressor HrcA</fullName>
    </recommendedName>
</protein>
<comment type="function">
    <text evidence="1">Negative regulator of class I heat shock genes (grpE-dnaK-dnaJ and groELS operons). Prevents heat-shock induction of these operons.</text>
</comment>
<comment type="similarity">
    <text evidence="1">Belongs to the HrcA family.</text>
</comment>
<name>HRCA_CHLTR</name>
<sequence>MENRIEMSQLRASKKDSKISYVLLMATKLYLEGGQPVGSKLLKETYCSDLSSATIRNYFAQLETDGFLRKNHISGGRIPTDLAFRYYADHNAPFLEQEEILAIQQKLTELPEYSKNIVKDLQKASEVLSDILQLPVCFSSPRFESDSVINIQLVAIDDQRVVFVLSTEFGQVFTDVLWLPEQLPENSLKRIEGFLQNYLRKQPSDSLLSQKEKDLGMVLYNEVVVRYLTRYCHFSEEDLYQTGLSRLLKYETFKDPETLAQGLAFFENRKHMCQLLNTYLHKETPTAFIGRELTDIVGNTDPSCAVITIPYYMDRTPLGAFGVLGPMNLPYQQVFGTLSLFTERLKVILTQSFYKFKLSFRRPCPTDPRCSQRPAELTRSSSIKLLPAKELS</sequence>
<evidence type="ECO:0000255" key="1">
    <source>
        <dbReference type="HAMAP-Rule" id="MF_00081"/>
    </source>
</evidence>
<dbReference type="EMBL" id="L25105">
    <property type="protein sequence ID" value="AAA23162.1"/>
    <property type="molecule type" value="Genomic_DNA"/>
</dbReference>
<dbReference type="EMBL" id="AE001273">
    <property type="protein sequence ID" value="AAC67991.1"/>
    <property type="molecule type" value="Genomic_DNA"/>
</dbReference>
<dbReference type="PIR" id="H71520">
    <property type="entry name" value="H71520"/>
</dbReference>
<dbReference type="RefSeq" id="NP_219904.1">
    <property type="nucleotide sequence ID" value="NC_000117.1"/>
</dbReference>
<dbReference type="RefSeq" id="WP_010725181.1">
    <property type="nucleotide sequence ID" value="NC_000117.1"/>
</dbReference>
<dbReference type="SMR" id="P36426"/>
<dbReference type="FunCoup" id="P36426">
    <property type="interactions" value="98"/>
</dbReference>
<dbReference type="STRING" id="272561.CT_394"/>
<dbReference type="EnsemblBacteria" id="AAC67991">
    <property type="protein sequence ID" value="AAC67991"/>
    <property type="gene ID" value="CT_394"/>
</dbReference>
<dbReference type="GeneID" id="884723"/>
<dbReference type="KEGG" id="ctr:CT_394"/>
<dbReference type="PATRIC" id="fig|272561.5.peg.424"/>
<dbReference type="HOGENOM" id="CLU_050019_1_0_0"/>
<dbReference type="InParanoid" id="P36426"/>
<dbReference type="OrthoDB" id="9783139at2"/>
<dbReference type="Proteomes" id="UP000000431">
    <property type="component" value="Chromosome"/>
</dbReference>
<dbReference type="GO" id="GO:0003677">
    <property type="term" value="F:DNA binding"/>
    <property type="evidence" value="ECO:0007669"/>
    <property type="project" value="InterPro"/>
</dbReference>
<dbReference type="GO" id="GO:0045892">
    <property type="term" value="P:negative regulation of DNA-templated transcription"/>
    <property type="evidence" value="ECO:0000318"/>
    <property type="project" value="GO_Central"/>
</dbReference>
<dbReference type="FunFam" id="1.10.10.10:FF:000785">
    <property type="entry name" value="Heat-inducible transcription repressor HrcA"/>
    <property type="match status" value="1"/>
</dbReference>
<dbReference type="FunFam" id="3.30.450.40:FF:000154">
    <property type="entry name" value="Heat-inducible transcription repressor HrcA"/>
    <property type="match status" value="1"/>
</dbReference>
<dbReference type="Gene3D" id="3.30.450.40">
    <property type="match status" value="1"/>
</dbReference>
<dbReference type="Gene3D" id="1.10.10.10">
    <property type="entry name" value="Winged helix-like DNA-binding domain superfamily/Winged helix DNA-binding domain"/>
    <property type="match status" value="1"/>
</dbReference>
<dbReference type="HAMAP" id="MF_00081">
    <property type="entry name" value="HrcA"/>
    <property type="match status" value="1"/>
</dbReference>
<dbReference type="InterPro" id="IPR029016">
    <property type="entry name" value="GAF-like_dom_sf"/>
</dbReference>
<dbReference type="InterPro" id="IPR002571">
    <property type="entry name" value="HrcA"/>
</dbReference>
<dbReference type="InterPro" id="IPR021153">
    <property type="entry name" value="HrcA_C"/>
</dbReference>
<dbReference type="InterPro" id="IPR036388">
    <property type="entry name" value="WH-like_DNA-bd_sf"/>
</dbReference>
<dbReference type="InterPro" id="IPR036390">
    <property type="entry name" value="WH_DNA-bd_sf"/>
</dbReference>
<dbReference type="NCBIfam" id="TIGR00331">
    <property type="entry name" value="hrcA"/>
    <property type="match status" value="1"/>
</dbReference>
<dbReference type="PANTHER" id="PTHR34824">
    <property type="entry name" value="HEAT-INDUCIBLE TRANSCRIPTION REPRESSOR HRCA"/>
    <property type="match status" value="1"/>
</dbReference>
<dbReference type="PANTHER" id="PTHR34824:SF1">
    <property type="entry name" value="HEAT-INDUCIBLE TRANSCRIPTION REPRESSOR HRCA"/>
    <property type="match status" value="1"/>
</dbReference>
<dbReference type="Pfam" id="PF01628">
    <property type="entry name" value="HrcA"/>
    <property type="match status" value="1"/>
</dbReference>
<dbReference type="PIRSF" id="PIRSF005485">
    <property type="entry name" value="HrcA"/>
    <property type="match status" value="1"/>
</dbReference>
<dbReference type="SUPFAM" id="SSF55781">
    <property type="entry name" value="GAF domain-like"/>
    <property type="match status" value="1"/>
</dbReference>
<dbReference type="SUPFAM" id="SSF46785">
    <property type="entry name" value="Winged helix' DNA-binding domain"/>
    <property type="match status" value="1"/>
</dbReference>
<organism>
    <name type="scientific">Chlamydia trachomatis serovar D (strain ATCC VR-885 / DSM 19411 / UW-3/Cx)</name>
    <dbReference type="NCBI Taxonomy" id="272561"/>
    <lineage>
        <taxon>Bacteria</taxon>
        <taxon>Pseudomonadati</taxon>
        <taxon>Chlamydiota</taxon>
        <taxon>Chlamydiia</taxon>
        <taxon>Chlamydiales</taxon>
        <taxon>Chlamydiaceae</taxon>
        <taxon>Chlamydia/Chlamydophila group</taxon>
        <taxon>Chlamydia</taxon>
    </lineage>
</organism>